<comment type="function">
    <text evidence="6">Quinone reductase that provides resistance to thiol-specific stress caused by electrophilic quinones (PubMed:24915188). Shows a preference for benzoquinones (PubMed:24915188).</text>
</comment>
<comment type="function">
    <text evidence="2 3 5">Also exhibits azoreductase activity. Catalyzes the reductive cleavage of the azo bond in aromatic azo compounds to the corresponding amines (PubMed:17904577, PubMed:20057057). NADPH is the preferred electron donor for azoreductase activity, but it can also use NADH (PubMed:17904577). Can reduce different classes of azo dyes, including the common azo dyes methyl red and p-aminoazobenzene sulfonamide (PAABSA) (PubMed:17904577, PubMed:20057057). Can activate several azo pro-drugs used in the treatment of inflammatory bowel disease (IBD), including balsalazide, sulfasalazine and olsalazine (PubMed:17904577, PubMed:20057057). Also acts as a nitrodeductase, and can reduce and hence activate the nitroaromatic drug nitrofurazone, a broad spectrum antibiotic (PubMed:22355582).</text>
</comment>
<comment type="catalytic activity">
    <reaction evidence="6">
        <text>2 a quinone + NADPH + H(+) = 2 a 1,4-benzosemiquinone + NADP(+)</text>
        <dbReference type="Rhea" id="RHEA:14269"/>
        <dbReference type="ChEBI" id="CHEBI:15378"/>
        <dbReference type="ChEBI" id="CHEBI:57783"/>
        <dbReference type="ChEBI" id="CHEBI:58349"/>
        <dbReference type="ChEBI" id="CHEBI:132124"/>
        <dbReference type="ChEBI" id="CHEBI:134225"/>
    </reaction>
</comment>
<comment type="catalytic activity">
    <reaction evidence="1">
        <text>2 a quinone + NADH + H(+) = 2 a 1,4-benzosemiquinone + NAD(+)</text>
        <dbReference type="Rhea" id="RHEA:65952"/>
        <dbReference type="ChEBI" id="CHEBI:15378"/>
        <dbReference type="ChEBI" id="CHEBI:57540"/>
        <dbReference type="ChEBI" id="CHEBI:57945"/>
        <dbReference type="ChEBI" id="CHEBI:132124"/>
        <dbReference type="ChEBI" id="CHEBI:134225"/>
    </reaction>
</comment>
<comment type="catalytic activity">
    <reaction evidence="1 2 3">
        <text>N,N-dimethyl-1,4-phenylenediamine + anthranilate + 2 NAD(+) = 2-(4-dimethylaminophenyl)diazenylbenzoate + 2 NADH + 2 H(+)</text>
        <dbReference type="Rhea" id="RHEA:55872"/>
        <dbReference type="ChEBI" id="CHEBI:15378"/>
        <dbReference type="ChEBI" id="CHEBI:15783"/>
        <dbReference type="ChEBI" id="CHEBI:16567"/>
        <dbReference type="ChEBI" id="CHEBI:57540"/>
        <dbReference type="ChEBI" id="CHEBI:57945"/>
        <dbReference type="ChEBI" id="CHEBI:71579"/>
        <dbReference type="EC" id="1.7.1.17"/>
    </reaction>
    <physiologicalReaction direction="right-to-left" evidence="2 3">
        <dbReference type="Rhea" id="RHEA:55874"/>
    </physiologicalReaction>
</comment>
<comment type="cofactor">
    <cofactor evidence="1 2 3">
        <name>FMN</name>
        <dbReference type="ChEBI" id="CHEBI:58210"/>
    </cofactor>
    <text evidence="1 2 3">Binds 1 FMN per subunit.</text>
</comment>
<comment type="activity regulation">
    <text evidence="2">Azoreductase activity increases with salt strength.</text>
</comment>
<comment type="biophysicochemical properties">
    <kinetics>
        <KM evidence="2">76 uM for methyl red (in the presence of NADPH)</KM>
        <KM evidence="3">92.7 uM for methyl red (in the presence of NADPH)</KM>
        <KM evidence="2">69 uM for sulfasalazine (in the presence of NADPH)</KM>
        <KM evidence="2">124 uM for balsalazide (in the presence of NADPH)</KM>
        <KM evidence="3">98.6 uM for balsalazide (in the presence of NADPH)</KM>
        <KM evidence="2">104 uM for olsalazine (in the presence of NADPH)</KM>
        <KM evidence="5">15.7 uM for nitrofurazone</KM>
        <KM evidence="2">464 uM for NADH (in the presence of methyl red)</KM>
        <KM evidence="3">538 uM for NADH (in the presence of methyl red)</KM>
        <KM evidence="2">1100 uM for NADPH (in the presence of methyl red)</KM>
        <KM evidence="3">1197 uM for NADPH (in the presence of methyl red)</KM>
        <Vmax evidence="2">28.0 umol/sec/mg enzyme with methyl red as substrate (in the presence of NADPH)</Vmax>
        <Vmax evidence="2">28.0 umol/sec/mg enzyme with sulfasalazine as substrate (in the presence of NADPH)</Vmax>
        <Vmax evidence="2">81.0 umol/sec/mg enzyme with balsalazide as substrate (in the presence of NADPH)</Vmax>
        <Vmax evidence="2">5.4 umol/sec/mg enzyme with olsalazine as substrate (in the presence of NADPH)</Vmax>
        <Vmax evidence="2">22.0 umol/sec/mg enzyme with NADH as substrate (in the presence of methyl red)</Vmax>
        <Vmax evidence="2">74.0 umol/sec/mg enzyme with NADPH as substrate (in the presence of methyl red)</Vmax>
        <text evidence="2">kcat is 13 sec(-1) with methyl red as substrate. kcat is 13 sec(-1) with sulfasalazine as substrate. kcat is 37 sec(-1) with balsalazide as substrate. kcat is 2.5 sec(-1) with olsalazine as substrate. kcat is 10 sec(-1) with NADH as substrate. kcat is 34 sec(-1) with NADPH as substrate.</text>
    </kinetics>
</comment>
<comment type="subunit">
    <text evidence="2">Homodimer (PubMed:17904577). Homotetramer formed by a dimer of dimers when the ionic strength is high (PubMed:17904577).</text>
</comment>
<comment type="miscellaneous">
    <text evidence="6">Rate of quinone reduction is higher than reduction of azo substrates, suggesting the enzyme is better suited for carrying out quinone rather than azo reduction.</text>
</comment>
<comment type="similarity">
    <text evidence="1">Belongs to the azoreductase type 1 family.</text>
</comment>
<accession>Q9I5F3</accession>
<feature type="chain" id="PRO_0000166347" description="FMN-dependent NAD(P)H:quinone oxidoreductase 1">
    <location>
        <begin position="1"/>
        <end position="212"/>
    </location>
</feature>
<feature type="binding site" evidence="1 2 3 4 5 6 12 13 14 15 16 17">
    <location>
        <position position="10"/>
    </location>
    <ligand>
        <name>FMN</name>
        <dbReference type="ChEBI" id="CHEBI:58210"/>
    </ligand>
</feature>
<feature type="binding site" evidence="1 2 3 4 5 6 12 13 14 15 16 17">
    <location>
        <begin position="16"/>
        <end position="18"/>
    </location>
    <ligand>
        <name>FMN</name>
        <dbReference type="ChEBI" id="CHEBI:58210"/>
    </ligand>
</feature>
<feature type="binding site" evidence="1 2 3 4 5 6 12 13 14 15 16 17">
    <location>
        <begin position="97"/>
        <end position="100"/>
    </location>
    <ligand>
        <name>FMN</name>
        <dbReference type="ChEBI" id="CHEBI:58210"/>
    </ligand>
</feature>
<feature type="binding site" evidence="10 11 14 15">
    <location>
        <position position="99"/>
    </location>
    <ligand>
        <name>substrate</name>
    </ligand>
</feature>
<feature type="binding site" evidence="10 11 14 15">
    <location>
        <position position="131"/>
    </location>
    <ligand>
        <name>substrate</name>
    </ligand>
</feature>
<feature type="binding site" evidence="1 2 3 4 5 6 12 13 14 15 16 17">
    <location>
        <begin position="145"/>
        <end position="148"/>
    </location>
    <ligand>
        <name>FMN</name>
        <dbReference type="ChEBI" id="CHEBI:58210"/>
    </ligand>
</feature>
<feature type="binding site" evidence="4 5 6 14 15 16 17">
    <location>
        <position position="187"/>
    </location>
    <ligand>
        <name>FMN</name>
        <dbReference type="ChEBI" id="CHEBI:58210"/>
    </ligand>
</feature>
<feature type="binding site" evidence="9 10 13 14">
    <location>
        <position position="188"/>
    </location>
    <ligand>
        <name>substrate</name>
    </ligand>
</feature>
<feature type="site" description="Important in the architecture of the active site" evidence="3">
    <location>
        <position position="131"/>
    </location>
</feature>
<feature type="mutagenesis site" description="2-fold increase in specific activity towards methyl red and 20% decrease in specific activity towards balsalazide. 2.5-fold increase in the kcat with NADH as substrate." evidence="3">
    <original>Y</original>
    <variation>F</variation>
    <location>
        <position position="131"/>
    </location>
</feature>
<feature type="strand" evidence="18">
    <location>
        <begin position="3"/>
        <end position="8"/>
    </location>
</feature>
<feature type="helix" evidence="18">
    <location>
        <begin position="17"/>
        <end position="32"/>
    </location>
</feature>
<feature type="strand" evidence="18">
    <location>
        <begin position="37"/>
        <end position="42"/>
    </location>
</feature>
<feature type="strand" evidence="18">
    <location>
        <begin position="44"/>
        <end position="46"/>
    </location>
</feature>
<feature type="helix" evidence="18">
    <location>
        <begin position="53"/>
        <end position="59"/>
    </location>
</feature>
<feature type="helix" evidence="18">
    <location>
        <begin position="64"/>
        <end position="66"/>
    </location>
</feature>
<feature type="helix" evidence="18">
    <location>
        <begin position="69"/>
        <end position="86"/>
    </location>
</feature>
<feature type="strand" evidence="18">
    <location>
        <begin position="89"/>
        <end position="96"/>
    </location>
</feature>
<feature type="helix" evidence="18">
    <location>
        <begin position="104"/>
        <end position="113"/>
    </location>
</feature>
<feature type="turn" evidence="18">
    <location>
        <begin position="116"/>
        <end position="118"/>
    </location>
</feature>
<feature type="strand" evidence="18">
    <location>
        <begin position="119"/>
        <end position="123"/>
    </location>
</feature>
<feature type="strand" evidence="18">
    <location>
        <begin position="130"/>
        <end position="133"/>
    </location>
</feature>
<feature type="strand" evidence="18">
    <location>
        <begin position="139"/>
        <end position="149"/>
    </location>
</feature>
<feature type="helix" evidence="18">
    <location>
        <begin position="158"/>
        <end position="160"/>
    </location>
</feature>
<feature type="helix" evidence="18">
    <location>
        <begin position="164"/>
        <end position="173"/>
    </location>
</feature>
<feature type="strand" evidence="18">
    <location>
        <begin position="179"/>
        <end position="185"/>
    </location>
</feature>
<feature type="turn" evidence="18">
    <location>
        <begin position="187"/>
        <end position="189"/>
    </location>
</feature>
<feature type="helix" evidence="18">
    <location>
        <begin position="194"/>
        <end position="211"/>
    </location>
</feature>
<evidence type="ECO:0000255" key="1">
    <source>
        <dbReference type="HAMAP-Rule" id="MF_01216"/>
    </source>
</evidence>
<evidence type="ECO:0000269" key="2">
    <source>
    </source>
</evidence>
<evidence type="ECO:0000269" key="3">
    <source>
    </source>
</evidence>
<evidence type="ECO:0000269" key="4">
    <source>
    </source>
</evidence>
<evidence type="ECO:0000269" key="5">
    <source>
    </source>
</evidence>
<evidence type="ECO:0000269" key="6">
    <source>
    </source>
</evidence>
<evidence type="ECO:0000303" key="7">
    <source>
    </source>
</evidence>
<evidence type="ECO:0000305" key="8"/>
<evidence type="ECO:0000305" key="9">
    <source>
    </source>
</evidence>
<evidence type="ECO:0000305" key="10">
    <source>
    </source>
</evidence>
<evidence type="ECO:0000305" key="11">
    <source>
    </source>
</evidence>
<evidence type="ECO:0007744" key="12">
    <source>
        <dbReference type="PDB" id="2V9C"/>
    </source>
</evidence>
<evidence type="ECO:0007744" key="13">
    <source>
        <dbReference type="PDB" id="3KEG"/>
    </source>
</evidence>
<evidence type="ECO:0007744" key="14">
    <source>
        <dbReference type="PDB" id="3LT5"/>
    </source>
</evidence>
<evidence type="ECO:0007744" key="15">
    <source>
        <dbReference type="PDB" id="3R6W"/>
    </source>
</evidence>
<evidence type="ECO:0007744" key="16">
    <source>
        <dbReference type="PDB" id="4N65"/>
    </source>
</evidence>
<evidence type="ECO:0007744" key="17">
    <source>
        <dbReference type="PDB" id="4N9Q"/>
    </source>
</evidence>
<evidence type="ECO:0007829" key="18">
    <source>
        <dbReference type="PDB" id="4N65"/>
    </source>
</evidence>
<keyword id="KW-0002">3D-structure</keyword>
<keyword id="KW-0285">Flavoprotein</keyword>
<keyword id="KW-0288">FMN</keyword>
<keyword id="KW-0520">NAD</keyword>
<keyword id="KW-0560">Oxidoreductase</keyword>
<keyword id="KW-1185">Reference proteome</keyword>
<protein>
    <recommendedName>
        <fullName evidence="8">FMN-dependent NAD(P)H:quinone oxidoreductase 1</fullName>
        <ecNumber evidence="1 6">1.6.5.-</ecNumber>
    </recommendedName>
    <alternativeName>
        <fullName evidence="1">Azo-dye reductase 1</fullName>
    </alternativeName>
    <alternativeName>
        <fullName evidence="1">FMN-dependent NADH-azo compound oxidoreductase 1</fullName>
    </alternativeName>
    <alternativeName>
        <fullName evidence="1">FMN-dependent NADH-azoreductase 1</fullName>
        <ecNumber evidence="1">1.7.1.17</ecNumber>
    </alternativeName>
</protein>
<reference key="1">
    <citation type="journal article" date="2000" name="Nature">
        <title>Complete genome sequence of Pseudomonas aeruginosa PAO1, an opportunistic pathogen.</title>
        <authorList>
            <person name="Stover C.K."/>
            <person name="Pham X.-Q.T."/>
            <person name="Erwin A.L."/>
            <person name="Mizoguchi S.D."/>
            <person name="Warrener P."/>
            <person name="Hickey M.J."/>
            <person name="Brinkman F.S.L."/>
            <person name="Hufnagle W.O."/>
            <person name="Kowalik D.J."/>
            <person name="Lagrou M."/>
            <person name="Garber R.L."/>
            <person name="Goltry L."/>
            <person name="Tolentino E."/>
            <person name="Westbrock-Wadman S."/>
            <person name="Yuan Y."/>
            <person name="Brody L.L."/>
            <person name="Coulter S.N."/>
            <person name="Folger K.R."/>
            <person name="Kas A."/>
            <person name="Larbig K."/>
            <person name="Lim R.M."/>
            <person name="Smith K.A."/>
            <person name="Spencer D.H."/>
            <person name="Wong G.K.-S."/>
            <person name="Wu Z."/>
            <person name="Paulsen I.T."/>
            <person name="Reizer J."/>
            <person name="Saier M.H. Jr."/>
            <person name="Hancock R.E.W."/>
            <person name="Lory S."/>
            <person name="Olson M.V."/>
        </authorList>
    </citation>
    <scope>NUCLEOTIDE SEQUENCE [LARGE SCALE GENOMIC DNA]</scope>
    <source>
        <strain>ATCC 15692 / DSM 22644 / CIP 104116 / JCM 14847 / LMG 12228 / 1C / PRS 101 / PAO1</strain>
    </source>
</reference>
<reference evidence="12" key="2">
    <citation type="journal article" date="2007" name="J. Mol. Biol.">
        <title>Molecular cloning, characterisation and ligand-bound structure of an azoreductase from Pseudomonas aeruginosa.</title>
        <authorList>
            <person name="Wang C.J."/>
            <person name="Hagemeier C."/>
            <person name="Rahman N."/>
            <person name="Lowe E."/>
            <person name="Noble M."/>
            <person name="Coughtrie M."/>
            <person name="Sim E."/>
            <person name="Westwood I."/>
        </authorList>
    </citation>
    <scope>X-RAY CRYSTALLOGRAPHY (2.18 ANGSTROMS) IN COMPLEX WITH FMN AND METHYL RED</scope>
    <scope>FUNCTION</scope>
    <scope>CATALYTIC ACTIVITY</scope>
    <scope>COFACTOR</scope>
    <scope>ACTIVITY REGULATION</scope>
    <scope>BIOPHYSICOCHEMICAL PROPERTIES</scope>
    <scope>SUBUNIT</scope>
</reference>
<reference evidence="13" key="3">
    <citation type="journal article" date="2010" name="Acta Crystallogr. F">
        <title>Role of tyrosine 131 in the active site of paAzoR1, an azoreductase with specificity for the inflammatory bowel disease prodrug balsalazide.</title>
        <authorList>
            <person name="Wang C.J."/>
            <person name="Laurieri N."/>
            <person name="Abuhammad A."/>
            <person name="Lowe E."/>
            <person name="Westwood I."/>
            <person name="Ryan A."/>
            <person name="Sim E."/>
        </authorList>
    </citation>
    <scope>X-RAY CRYSTALLOGRAPHY (2.10 ANGSTROMS) OF MUTANT PHE-131 IN COMPLEX WITH FMN AND METHYL RED</scope>
    <scope>FUNCTION</scope>
    <scope>CATALYTIC ACTIVITY</scope>
    <scope>COFACTOR</scope>
    <scope>BIOPHYSICOCHEMICAL PROPERTIES</scope>
    <scope>MUTAGENESIS OF TYR-131</scope>
</reference>
<reference evidence="14" key="4">
    <citation type="journal article" date="2010" name="J. Mol. Biol.">
        <title>A novel mechanism for azoreduction.</title>
        <authorList>
            <person name="Ryan A."/>
            <person name="Laurieri N."/>
            <person name="Westwood I."/>
            <person name="Wang C.J."/>
            <person name="Lowe E."/>
            <person name="Sim E."/>
        </authorList>
    </citation>
    <scope>X-RAY CRYSTALLOGRAPHY (2.30 ANGSTROMS) IN COMPLEX WITH FMN AND BALSALAZIDE</scope>
    <source>
        <strain>ATCC 15692 / DSM 22644 / CIP 104116 / JCM 14847 / LMG 12228 / 1C / PRS 101 / PAO1</strain>
    </source>
</reference>
<reference evidence="15" key="5">
    <citation type="journal article" date="2011" name="Sci. Rep.">
        <title>Activation of nitrofurazone by azoreductases: multiple activities in one enzyme.</title>
        <authorList>
            <person name="Ryan A."/>
            <person name="Kaplan E."/>
            <person name="Laurieri N."/>
            <person name="Lowe E."/>
            <person name="Sim E."/>
        </authorList>
    </citation>
    <scope>X-RAY CRYSTALLOGRAPHY (2.08 ANGSTROMS) IN COMPLEX WITH FMN AND NITROFURAZONE</scope>
    <scope>FUNCTION</scope>
    <scope>BIOPHYSICOCHEMICAL PROPERTIES</scope>
</reference>
<reference evidence="16 17" key="6">
    <citation type="journal article" date="2014" name="PLoS ONE">
        <title>Identification of NAD(P)H quinone oxidoreductase activity in azoreductases from P. aeruginosa: azoreductases and NAD(P)H quinone oxidoreductases belong to the same FMN-dependent superfamily of enzymes.</title>
        <authorList>
            <person name="Ryan A."/>
            <person name="Kaplan E."/>
            <person name="Nebel J.C."/>
            <person name="Polycarpou E."/>
            <person name="Crescente V."/>
            <person name="Lowe E."/>
            <person name="Preston G.M."/>
            <person name="Sim E."/>
        </authorList>
    </citation>
    <scope>X-RAY CRYSTALLOGRAPHY (1.82 ANGSTROMS) IN COMPLEXES WITH FMN; ANTHRAQUINONE-2-SULPHONATE AND UBIQUINONE-1</scope>
    <scope>FUNCTION</scope>
    <scope>CATALYTIC ACTIVITY</scope>
</reference>
<gene>
    <name evidence="1 7" type="primary">azoR1</name>
    <name type="ordered locus">PA0785</name>
</gene>
<dbReference type="EC" id="1.6.5.-" evidence="1 6"/>
<dbReference type="EC" id="1.7.1.17" evidence="1"/>
<dbReference type="EMBL" id="AE004091">
    <property type="protein sequence ID" value="AAG04174.1"/>
    <property type="molecule type" value="Genomic_DNA"/>
</dbReference>
<dbReference type="PIR" id="H83547">
    <property type="entry name" value="H83547"/>
</dbReference>
<dbReference type="RefSeq" id="NP_249476.1">
    <property type="nucleotide sequence ID" value="NC_002516.2"/>
</dbReference>
<dbReference type="RefSeq" id="WP_003114189.1">
    <property type="nucleotide sequence ID" value="NZ_QZGE01000007.1"/>
</dbReference>
<dbReference type="PDB" id="2V9C">
    <property type="method" value="X-ray"/>
    <property type="resolution" value="2.18 A"/>
    <property type="chains" value="A/B=1-212"/>
</dbReference>
<dbReference type="PDB" id="3KEG">
    <property type="method" value="X-ray"/>
    <property type="resolution" value="2.10 A"/>
    <property type="chains" value="A/B=1-212"/>
</dbReference>
<dbReference type="PDB" id="3LT5">
    <property type="method" value="X-ray"/>
    <property type="resolution" value="2.30 A"/>
    <property type="chains" value="A/B=1-212"/>
</dbReference>
<dbReference type="PDB" id="3R6W">
    <property type="method" value="X-ray"/>
    <property type="resolution" value="2.08 A"/>
    <property type="chains" value="A/B=1-212"/>
</dbReference>
<dbReference type="PDB" id="4N65">
    <property type="method" value="X-ray"/>
    <property type="resolution" value="1.82 A"/>
    <property type="chains" value="A/B=1-212"/>
</dbReference>
<dbReference type="PDB" id="4N9Q">
    <property type="method" value="X-ray"/>
    <property type="resolution" value="2.00 A"/>
    <property type="chains" value="A/B=1-212"/>
</dbReference>
<dbReference type="PDBsum" id="2V9C"/>
<dbReference type="PDBsum" id="3KEG"/>
<dbReference type="PDBsum" id="3LT5"/>
<dbReference type="PDBsum" id="3R6W"/>
<dbReference type="PDBsum" id="4N65"/>
<dbReference type="PDBsum" id="4N9Q"/>
<dbReference type="SMR" id="Q9I5F3"/>
<dbReference type="STRING" id="208964.PA0785"/>
<dbReference type="DrugBank" id="DB08209">
    <property type="generic name" value="Methyl red"/>
</dbReference>
<dbReference type="PaxDb" id="208964-PA0785"/>
<dbReference type="DNASU" id="882036"/>
<dbReference type="GeneID" id="882036"/>
<dbReference type="KEGG" id="pae:PA0785"/>
<dbReference type="PATRIC" id="fig|208964.12.peg.816"/>
<dbReference type="PseudoCAP" id="PA0785"/>
<dbReference type="HOGENOM" id="CLU_088964_0_0_6"/>
<dbReference type="InParanoid" id="Q9I5F3"/>
<dbReference type="OrthoDB" id="9787136at2"/>
<dbReference type="PhylomeDB" id="Q9I5F3"/>
<dbReference type="BioCyc" id="PAER208964:G1FZ6-798-MONOMER"/>
<dbReference type="BRENDA" id="1.7.1.6">
    <property type="organism ID" value="5087"/>
</dbReference>
<dbReference type="EvolutionaryTrace" id="Q9I5F3"/>
<dbReference type="Proteomes" id="UP000002438">
    <property type="component" value="Chromosome"/>
</dbReference>
<dbReference type="GO" id="GO:0009055">
    <property type="term" value="F:electron transfer activity"/>
    <property type="evidence" value="ECO:0007669"/>
    <property type="project" value="UniProtKB-UniRule"/>
</dbReference>
<dbReference type="GO" id="GO:0010181">
    <property type="term" value="F:FMN binding"/>
    <property type="evidence" value="ECO:0007669"/>
    <property type="project" value="UniProtKB-UniRule"/>
</dbReference>
<dbReference type="GO" id="GO:0003960">
    <property type="term" value="F:NADPH:quinone reductase activity"/>
    <property type="evidence" value="ECO:0007669"/>
    <property type="project" value="RHEA"/>
</dbReference>
<dbReference type="GO" id="GO:0016652">
    <property type="term" value="F:oxidoreductase activity, acting on NAD(P)H as acceptor"/>
    <property type="evidence" value="ECO:0007669"/>
    <property type="project" value="UniProtKB-UniRule"/>
</dbReference>
<dbReference type="GO" id="GO:0016655">
    <property type="term" value="F:oxidoreductase activity, acting on NAD(P)H, quinone or similar compound as acceptor"/>
    <property type="evidence" value="ECO:0000314"/>
    <property type="project" value="PseudoCAP"/>
</dbReference>
<dbReference type="FunFam" id="3.40.50.360:FF:000114">
    <property type="entry name" value="FMN-dependent NADH-azoreductase 1"/>
    <property type="match status" value="1"/>
</dbReference>
<dbReference type="Gene3D" id="3.40.50.360">
    <property type="match status" value="1"/>
</dbReference>
<dbReference type="HAMAP" id="MF_01216">
    <property type="entry name" value="Azoreductase_type1"/>
    <property type="match status" value="1"/>
</dbReference>
<dbReference type="InterPro" id="IPR003680">
    <property type="entry name" value="Flavodoxin_fold"/>
</dbReference>
<dbReference type="InterPro" id="IPR029039">
    <property type="entry name" value="Flavoprotein-like_sf"/>
</dbReference>
<dbReference type="InterPro" id="IPR050104">
    <property type="entry name" value="FMN-dep_NADH:Q_OxRdtase_AzoR1"/>
</dbReference>
<dbReference type="InterPro" id="IPR023048">
    <property type="entry name" value="NADH:quinone_OxRdtase_FMN_depd"/>
</dbReference>
<dbReference type="PANTHER" id="PTHR43741">
    <property type="entry name" value="FMN-DEPENDENT NADH-AZOREDUCTASE 1"/>
    <property type="match status" value="1"/>
</dbReference>
<dbReference type="PANTHER" id="PTHR43741:SF2">
    <property type="entry name" value="FMN-DEPENDENT NADH:QUINONE OXIDOREDUCTASE"/>
    <property type="match status" value="1"/>
</dbReference>
<dbReference type="Pfam" id="PF02525">
    <property type="entry name" value="Flavodoxin_2"/>
    <property type="match status" value="1"/>
</dbReference>
<dbReference type="SUPFAM" id="SSF52218">
    <property type="entry name" value="Flavoproteins"/>
    <property type="match status" value="1"/>
</dbReference>
<organism>
    <name type="scientific">Pseudomonas aeruginosa (strain ATCC 15692 / DSM 22644 / CIP 104116 / JCM 14847 / LMG 12228 / 1C / PRS 101 / PAO1)</name>
    <dbReference type="NCBI Taxonomy" id="208964"/>
    <lineage>
        <taxon>Bacteria</taxon>
        <taxon>Pseudomonadati</taxon>
        <taxon>Pseudomonadota</taxon>
        <taxon>Gammaproteobacteria</taxon>
        <taxon>Pseudomonadales</taxon>
        <taxon>Pseudomonadaceae</taxon>
        <taxon>Pseudomonas</taxon>
    </lineage>
</organism>
<proteinExistence type="evidence at protein level"/>
<name>AZOR1_PSEAE</name>
<sequence length="212" mass="23050">MSRILAVHASPRGERSQSRRLAEVFLAAYREAHPQARVARREVGRVPLPAVTEAFVAAAFHPQPEQRSLAMQADLALSDQLVGELFDSDLLVISTPMYNFSVPSGLKAWIDQIVRLGVTFDFVLDNGVAQYRPLLRGKRALIVTSRGGHGFGPGGENQAMNHADPWLRTALGFIGIDEVTVVAAEGEESGGRSFEDSCDEAEQRLLALARSA</sequence>